<sequence length="69" mass="7936">MNNIIDSSKYRLNRCIPSVFGDTNTPHITSSMIIDVLYVGKIYERCRLGCRTRTQGMFRVVLNAQLNIQ</sequence>
<gene>
    <name type="ordered locus">YOR108C-A</name>
</gene>
<name>YO108_YEAST</name>
<comment type="miscellaneous">
    <text evidence="1">Completely overlaps LEU9.</text>
</comment>
<comment type="caution">
    <text evidence="2">Product of a dubious gene prediction unlikely to encode a functional protein. Because of that it is not part of the S.cerevisiae S288c complete/reference proteome set.</text>
</comment>
<protein>
    <recommendedName>
        <fullName>Putative uncharacterized protein YOR108C-A</fullName>
    </recommendedName>
</protein>
<accession>Q8TGL6</accession>
<feature type="chain" id="PRO_0000299713" description="Putative uncharacterized protein YOR108C-A">
    <location>
        <begin position="1"/>
        <end position="69"/>
    </location>
</feature>
<dbReference type="EMBL" id="X94335">
    <property type="status" value="NOT_ANNOTATED_CDS"/>
    <property type="molecule type" value="Genomic_DNA"/>
</dbReference>
<dbReference type="EMBL" id="Z75016">
    <property type="status" value="NOT_ANNOTATED_CDS"/>
    <property type="molecule type" value="Genomic_DNA"/>
</dbReference>
<dbReference type="EMBL" id="AF479976">
    <property type="protein sequence ID" value="AAL79289.1"/>
    <property type="molecule type" value="Genomic_DNA"/>
</dbReference>
<dbReference type="PaxDb" id="4932-YOR108C-A"/>
<dbReference type="EnsemblFungi" id="YOR108C-A_mRNA">
    <property type="protein sequence ID" value="YOR108C-A"/>
    <property type="gene ID" value="YOR108C-A"/>
</dbReference>
<dbReference type="AGR" id="SGD:S000028711"/>
<dbReference type="SGD" id="S000028711">
    <property type="gene designation" value="YOR108C-A"/>
</dbReference>
<dbReference type="HOGENOM" id="CLU_2777833_0_0_1"/>
<proteinExistence type="uncertain"/>
<organism>
    <name type="scientific">Saccharomyces cerevisiae (strain ATCC 204508 / S288c)</name>
    <name type="common">Baker's yeast</name>
    <dbReference type="NCBI Taxonomy" id="559292"/>
    <lineage>
        <taxon>Eukaryota</taxon>
        <taxon>Fungi</taxon>
        <taxon>Dikarya</taxon>
        <taxon>Ascomycota</taxon>
        <taxon>Saccharomycotina</taxon>
        <taxon>Saccharomycetes</taxon>
        <taxon>Saccharomycetales</taxon>
        <taxon>Saccharomycetaceae</taxon>
        <taxon>Saccharomyces</taxon>
    </lineage>
</organism>
<evidence type="ECO:0000305" key="1"/>
<evidence type="ECO:0000305" key="2">
    <source>
    </source>
</evidence>
<reference key="1">
    <citation type="journal article" date="1997" name="Yeast">
        <title>DNA sequencing and analysis of 130 kb from yeast chromosome XV.</title>
        <authorList>
            <person name="Voss H."/>
            <person name="Benes V."/>
            <person name="Andrade M.A."/>
            <person name="Valencia A."/>
            <person name="Rechmann S."/>
            <person name="Teodoru C."/>
            <person name="Schwager C."/>
            <person name="Paces V."/>
            <person name="Sander C."/>
            <person name="Ansorge W."/>
        </authorList>
    </citation>
    <scope>NUCLEOTIDE SEQUENCE [GENOMIC DNA]</scope>
</reference>
<reference key="2">
    <citation type="journal article" date="1997" name="Nature">
        <title>The nucleotide sequence of Saccharomyces cerevisiae chromosome XV.</title>
        <authorList>
            <person name="Dujon B."/>
            <person name="Albermann K."/>
            <person name="Aldea M."/>
            <person name="Alexandraki D."/>
            <person name="Ansorge W."/>
            <person name="Arino J."/>
            <person name="Benes V."/>
            <person name="Bohn C."/>
            <person name="Bolotin-Fukuhara M."/>
            <person name="Bordonne R."/>
            <person name="Boyer J."/>
            <person name="Camasses A."/>
            <person name="Casamayor A."/>
            <person name="Casas C."/>
            <person name="Cheret G."/>
            <person name="Cziepluch C."/>
            <person name="Daignan-Fornier B."/>
            <person name="Dang V.-D."/>
            <person name="de Haan M."/>
            <person name="Delius H."/>
            <person name="Durand P."/>
            <person name="Fairhead C."/>
            <person name="Feldmann H."/>
            <person name="Gaillon L."/>
            <person name="Galisson F."/>
            <person name="Gamo F.-J."/>
            <person name="Gancedo C."/>
            <person name="Goffeau A."/>
            <person name="Goulding S.E."/>
            <person name="Grivell L.A."/>
            <person name="Habbig B."/>
            <person name="Hand N.J."/>
            <person name="Hani J."/>
            <person name="Hattenhorst U."/>
            <person name="Hebling U."/>
            <person name="Hernando Y."/>
            <person name="Herrero E."/>
            <person name="Heumann K."/>
            <person name="Hiesel R."/>
            <person name="Hilger F."/>
            <person name="Hofmann B."/>
            <person name="Hollenberg C.P."/>
            <person name="Hughes B."/>
            <person name="Jauniaux J.-C."/>
            <person name="Kalogeropoulos A."/>
            <person name="Katsoulou C."/>
            <person name="Kordes E."/>
            <person name="Lafuente M.J."/>
            <person name="Landt O."/>
            <person name="Louis E.J."/>
            <person name="Maarse A.C."/>
            <person name="Madania A."/>
            <person name="Mannhaupt G."/>
            <person name="Marck C."/>
            <person name="Martin R.P."/>
            <person name="Mewes H.-W."/>
            <person name="Michaux G."/>
            <person name="Paces V."/>
            <person name="Parle-McDermott A.G."/>
            <person name="Pearson B.M."/>
            <person name="Perrin A."/>
            <person name="Pettersson B."/>
            <person name="Poch O."/>
            <person name="Pohl T.M."/>
            <person name="Poirey R."/>
            <person name="Portetelle D."/>
            <person name="Pujol A."/>
            <person name="Purnelle B."/>
            <person name="Ramezani Rad M."/>
            <person name="Rechmann S."/>
            <person name="Schwager C."/>
            <person name="Schweizer M."/>
            <person name="Sor F."/>
            <person name="Sterky F."/>
            <person name="Tarassov I.A."/>
            <person name="Teodoru C."/>
            <person name="Tettelin H."/>
            <person name="Thierry A."/>
            <person name="Tobiasch E."/>
            <person name="Tzermia M."/>
            <person name="Uhlen M."/>
            <person name="Unseld M."/>
            <person name="Valens M."/>
            <person name="Vandenbol M."/>
            <person name="Vetter I."/>
            <person name="Vlcek C."/>
            <person name="Voet M."/>
            <person name="Volckaert G."/>
            <person name="Voss H."/>
            <person name="Wambutt R."/>
            <person name="Wedler H."/>
            <person name="Wiemann S."/>
            <person name="Winsor B."/>
            <person name="Wolfe K.H."/>
            <person name="Zollner A."/>
            <person name="Zumstein E."/>
            <person name="Kleine K."/>
        </authorList>
    </citation>
    <scope>NUCLEOTIDE SEQUENCE [LARGE SCALE GENOMIC DNA]</scope>
    <source>
        <strain>ATCC 204508 / S288c</strain>
    </source>
</reference>
<reference key="3">
    <citation type="journal article" date="2014" name="G3 (Bethesda)">
        <title>The reference genome sequence of Saccharomyces cerevisiae: Then and now.</title>
        <authorList>
            <person name="Engel S.R."/>
            <person name="Dietrich F.S."/>
            <person name="Fisk D.G."/>
            <person name="Binkley G."/>
            <person name="Balakrishnan R."/>
            <person name="Costanzo M.C."/>
            <person name="Dwight S.S."/>
            <person name="Hitz B.C."/>
            <person name="Karra K."/>
            <person name="Nash R.S."/>
            <person name="Weng S."/>
            <person name="Wong E.D."/>
            <person name="Lloyd P."/>
            <person name="Skrzypek M.S."/>
            <person name="Miyasato S.R."/>
            <person name="Simison M."/>
            <person name="Cherry J.M."/>
        </authorList>
    </citation>
    <scope>GENOME REANNOTATION</scope>
    <source>
        <strain>ATCC 204508 / S288c</strain>
    </source>
</reference>
<reference key="4">
    <citation type="journal article" date="2002" name="Nat. Biotechnol.">
        <title>An integrated approach for finding overlooked genes in yeast.</title>
        <authorList>
            <person name="Kumar A."/>
            <person name="Harrison P.M."/>
            <person name="Cheung K.-H."/>
            <person name="Lan N."/>
            <person name="Echols N."/>
            <person name="Bertone P."/>
            <person name="Miller P."/>
            <person name="Gerstein M.B."/>
            <person name="Snyder M."/>
        </authorList>
    </citation>
    <scope>NUCLEOTIDE SEQUENCE [GENOMIC DNA]</scope>
</reference>